<evidence type="ECO:0000250" key="1">
    <source>
        <dbReference type="UniProtKB" id="Q96S16"/>
    </source>
</evidence>
<evidence type="ECO:0000255" key="2"/>
<evidence type="ECO:0000255" key="3">
    <source>
        <dbReference type="PROSITE-ProRule" id="PRU00498"/>
    </source>
</evidence>
<evidence type="ECO:0000255" key="4">
    <source>
        <dbReference type="PROSITE-ProRule" id="PRU00538"/>
    </source>
</evidence>
<evidence type="ECO:0000305" key="5"/>
<evidence type="ECO:0000312" key="6">
    <source>
        <dbReference type="RGD" id="1307381"/>
    </source>
</evidence>
<proteinExistence type="evidence at transcript level"/>
<comment type="function">
    <text evidence="1">Functions as a positive regulator of TNF-induced NF-kappaB signaling. Regulates angiogenesis and cellular metabolism through interaction with PKM.</text>
</comment>
<comment type="subunit">
    <text evidence="1">Oligomer. Dimer. Interacts with PKM; regulates angiogenesis and metabolism.</text>
</comment>
<comment type="subcellular location">
    <subcellularLocation>
        <location evidence="1">Endoplasmic reticulum lumen</location>
    </subcellularLocation>
    <subcellularLocation>
        <location evidence="1">Cytoplasm</location>
    </subcellularLocation>
</comment>
<comment type="PTM">
    <text evidence="1">N-glycosylated.</text>
</comment>
<comment type="sequence caution" evidence="5">
    <conflict type="erroneous initiation">
        <sequence resource="EMBL-CDS" id="AAH79205"/>
    </conflict>
    <text>Extended N-terminus.</text>
</comment>
<reference key="1">
    <citation type="journal article" date="2004" name="Nature">
        <title>Genome sequence of the Brown Norway rat yields insights into mammalian evolution.</title>
        <authorList>
            <person name="Gibbs R.A."/>
            <person name="Weinstock G.M."/>
            <person name="Metzker M.L."/>
            <person name="Muzny D.M."/>
            <person name="Sodergren E.J."/>
            <person name="Scherer S."/>
            <person name="Scott G."/>
            <person name="Steffen D."/>
            <person name="Worley K.C."/>
            <person name="Burch P.E."/>
            <person name="Okwuonu G."/>
            <person name="Hines S."/>
            <person name="Lewis L."/>
            <person name="Deramo C."/>
            <person name="Delgado O."/>
            <person name="Dugan-Rocha S."/>
            <person name="Miner G."/>
            <person name="Morgan M."/>
            <person name="Hawes A."/>
            <person name="Gill R."/>
            <person name="Holt R.A."/>
            <person name="Adams M.D."/>
            <person name="Amanatides P.G."/>
            <person name="Baden-Tillson H."/>
            <person name="Barnstead M."/>
            <person name="Chin S."/>
            <person name="Evans C.A."/>
            <person name="Ferriera S."/>
            <person name="Fosler C."/>
            <person name="Glodek A."/>
            <person name="Gu Z."/>
            <person name="Jennings D."/>
            <person name="Kraft C.L."/>
            <person name="Nguyen T."/>
            <person name="Pfannkoch C.M."/>
            <person name="Sitter C."/>
            <person name="Sutton G.G."/>
            <person name="Venter J.C."/>
            <person name="Woodage T."/>
            <person name="Smith D."/>
            <person name="Lee H.-M."/>
            <person name="Gustafson E."/>
            <person name="Cahill P."/>
            <person name="Kana A."/>
            <person name="Doucette-Stamm L."/>
            <person name="Weinstock K."/>
            <person name="Fechtel K."/>
            <person name="Weiss R.B."/>
            <person name="Dunn D.M."/>
            <person name="Green E.D."/>
            <person name="Blakesley R.W."/>
            <person name="Bouffard G.G."/>
            <person name="De Jong P.J."/>
            <person name="Osoegawa K."/>
            <person name="Zhu B."/>
            <person name="Marra M."/>
            <person name="Schein J."/>
            <person name="Bosdet I."/>
            <person name="Fjell C."/>
            <person name="Jones S."/>
            <person name="Krzywinski M."/>
            <person name="Mathewson C."/>
            <person name="Siddiqui A."/>
            <person name="Wye N."/>
            <person name="McPherson J."/>
            <person name="Zhao S."/>
            <person name="Fraser C.M."/>
            <person name="Shetty J."/>
            <person name="Shatsman S."/>
            <person name="Geer K."/>
            <person name="Chen Y."/>
            <person name="Abramzon S."/>
            <person name="Nierman W.C."/>
            <person name="Havlak P.H."/>
            <person name="Chen R."/>
            <person name="Durbin K.J."/>
            <person name="Egan A."/>
            <person name="Ren Y."/>
            <person name="Song X.-Z."/>
            <person name="Li B."/>
            <person name="Liu Y."/>
            <person name="Qin X."/>
            <person name="Cawley S."/>
            <person name="Cooney A.J."/>
            <person name="D'Souza L.M."/>
            <person name="Martin K."/>
            <person name="Wu J.Q."/>
            <person name="Gonzalez-Garay M.L."/>
            <person name="Jackson A.R."/>
            <person name="Kalafus K.J."/>
            <person name="McLeod M.P."/>
            <person name="Milosavljevic A."/>
            <person name="Virk D."/>
            <person name="Volkov A."/>
            <person name="Wheeler D.A."/>
            <person name="Zhang Z."/>
            <person name="Bailey J.A."/>
            <person name="Eichler E.E."/>
            <person name="Tuzun E."/>
            <person name="Birney E."/>
            <person name="Mongin E."/>
            <person name="Ureta-Vidal A."/>
            <person name="Woodwark C."/>
            <person name="Zdobnov E."/>
            <person name="Bork P."/>
            <person name="Suyama M."/>
            <person name="Torrents D."/>
            <person name="Alexandersson M."/>
            <person name="Trask B.J."/>
            <person name="Young J.M."/>
            <person name="Huang H."/>
            <person name="Wang H."/>
            <person name="Xing H."/>
            <person name="Daniels S."/>
            <person name="Gietzen D."/>
            <person name="Schmidt J."/>
            <person name="Stevens K."/>
            <person name="Vitt U."/>
            <person name="Wingrove J."/>
            <person name="Camara F."/>
            <person name="Mar Alba M."/>
            <person name="Abril J.F."/>
            <person name="Guigo R."/>
            <person name="Smit A."/>
            <person name="Dubchak I."/>
            <person name="Rubin E.M."/>
            <person name="Couronne O."/>
            <person name="Poliakov A."/>
            <person name="Huebner N."/>
            <person name="Ganten D."/>
            <person name="Goesele C."/>
            <person name="Hummel O."/>
            <person name="Kreitler T."/>
            <person name="Lee Y.-A."/>
            <person name="Monti J."/>
            <person name="Schulz H."/>
            <person name="Zimdahl H."/>
            <person name="Himmelbauer H."/>
            <person name="Lehrach H."/>
            <person name="Jacob H.J."/>
            <person name="Bromberg S."/>
            <person name="Gullings-Handley J."/>
            <person name="Jensen-Seaman M.I."/>
            <person name="Kwitek A.E."/>
            <person name="Lazar J."/>
            <person name="Pasko D."/>
            <person name="Tonellato P.J."/>
            <person name="Twigger S."/>
            <person name="Ponting C.P."/>
            <person name="Duarte J.M."/>
            <person name="Rice S."/>
            <person name="Goodstadt L."/>
            <person name="Beatson S.A."/>
            <person name="Emes R.D."/>
            <person name="Winter E.E."/>
            <person name="Webber C."/>
            <person name="Brandt P."/>
            <person name="Nyakatura G."/>
            <person name="Adetobi M."/>
            <person name="Chiaromonte F."/>
            <person name="Elnitski L."/>
            <person name="Eswara P."/>
            <person name="Hardison R.C."/>
            <person name="Hou M."/>
            <person name="Kolbe D."/>
            <person name="Makova K."/>
            <person name="Miller W."/>
            <person name="Nekrutenko A."/>
            <person name="Riemer C."/>
            <person name="Schwartz S."/>
            <person name="Taylor J."/>
            <person name="Yang S."/>
            <person name="Zhang Y."/>
            <person name="Lindpaintner K."/>
            <person name="Andrews T.D."/>
            <person name="Caccamo M."/>
            <person name="Clamp M."/>
            <person name="Clarke L."/>
            <person name="Curwen V."/>
            <person name="Durbin R.M."/>
            <person name="Eyras E."/>
            <person name="Searle S.M."/>
            <person name="Cooper G.M."/>
            <person name="Batzoglou S."/>
            <person name="Brudno M."/>
            <person name="Sidow A."/>
            <person name="Stone E.A."/>
            <person name="Payseur B.A."/>
            <person name="Bourque G."/>
            <person name="Lopez-Otin C."/>
            <person name="Puente X.S."/>
            <person name="Chakrabarti K."/>
            <person name="Chatterji S."/>
            <person name="Dewey C."/>
            <person name="Pachter L."/>
            <person name="Bray N."/>
            <person name="Yap V.B."/>
            <person name="Caspi A."/>
            <person name="Tesler G."/>
            <person name="Pevzner P.A."/>
            <person name="Haussler D."/>
            <person name="Roskin K.M."/>
            <person name="Baertsch R."/>
            <person name="Clawson H."/>
            <person name="Furey T.S."/>
            <person name="Hinrichs A.S."/>
            <person name="Karolchik D."/>
            <person name="Kent W.J."/>
            <person name="Rosenbloom K.R."/>
            <person name="Trumbower H."/>
            <person name="Weirauch M."/>
            <person name="Cooper D.N."/>
            <person name="Stenson P.D."/>
            <person name="Ma B."/>
            <person name="Brent M."/>
            <person name="Arumugam M."/>
            <person name="Shteynberg D."/>
            <person name="Copley R.R."/>
            <person name="Taylor M.S."/>
            <person name="Riethman H."/>
            <person name="Mudunuri U."/>
            <person name="Peterson J."/>
            <person name="Guyer M."/>
            <person name="Felsenfeld A."/>
            <person name="Old S."/>
            <person name="Mockrin S."/>
            <person name="Collins F.S."/>
        </authorList>
    </citation>
    <scope>NUCLEOTIDE SEQUENCE [LARGE SCALE GENOMIC DNA]</scope>
    <source>
        <strain>Brown Norway</strain>
    </source>
</reference>
<reference key="2">
    <citation type="journal article" date="2004" name="Genome Res.">
        <title>The status, quality, and expansion of the NIH full-length cDNA project: the Mammalian Gene Collection (MGC).</title>
        <authorList>
            <consortium name="The MGC Project Team"/>
        </authorList>
    </citation>
    <scope>NUCLEOTIDE SEQUENCE [LARGE SCALE MRNA]</scope>
    <source>
        <tissue>Testis</tissue>
    </source>
</reference>
<name>JMJD8_RAT</name>
<organism>
    <name type="scientific">Rattus norvegicus</name>
    <name type="common">Rat</name>
    <dbReference type="NCBI Taxonomy" id="10116"/>
    <lineage>
        <taxon>Eukaryota</taxon>
        <taxon>Metazoa</taxon>
        <taxon>Chordata</taxon>
        <taxon>Craniata</taxon>
        <taxon>Vertebrata</taxon>
        <taxon>Euteleostomi</taxon>
        <taxon>Mammalia</taxon>
        <taxon>Eutheria</taxon>
        <taxon>Euarchontoglires</taxon>
        <taxon>Glires</taxon>
        <taxon>Rodentia</taxon>
        <taxon>Myomorpha</taxon>
        <taxon>Muroidea</taxon>
        <taxon>Muridae</taxon>
        <taxon>Murinae</taxon>
        <taxon>Rattus</taxon>
    </lineage>
</organism>
<sequence>MAAAGRFGLLLLIVLWTMVTVVLPASGEGGWKQSRLGTEAAVMEEERCTVERRAHLTYSEFMQHYAFLKPVILQGLTDNSKFRALCSRENLLASFGDNVVRLSTANTYSYQKVDLPFQEYVEQLLHPQDPESLGNDTLYFFGDNNFTEWAPLFQHYRPPPFRLLGTTPAYSFGIAGAGSGVPFHWHGPGFSEVIYGRKRWFLYPPEKTPEFHPNKTTLAWLLEIYPSLAPSARPLECTIQAGEALYFPDRWWHATLNLDTSVFISTFLG</sequence>
<gene>
    <name evidence="6" type="primary">Jmjd8</name>
</gene>
<dbReference type="EMBL" id="AABR03073234">
    <property type="status" value="NOT_ANNOTATED_CDS"/>
    <property type="molecule type" value="Genomic_DNA"/>
</dbReference>
<dbReference type="EMBL" id="BC079205">
    <property type="protein sequence ID" value="AAH79205.1"/>
    <property type="status" value="ALT_INIT"/>
    <property type="molecule type" value="mRNA"/>
</dbReference>
<dbReference type="RefSeq" id="NP_001014138.1">
    <property type="nucleotide sequence ID" value="NM_001014116.1"/>
</dbReference>
<dbReference type="SMR" id="Q6AY40"/>
<dbReference type="FunCoup" id="Q6AY40">
    <property type="interactions" value="584"/>
</dbReference>
<dbReference type="STRING" id="10116.ENSRNOP00000069837"/>
<dbReference type="GlyCosmos" id="Q6AY40">
    <property type="glycosylation" value="3 sites, No reported glycans"/>
</dbReference>
<dbReference type="GlyGen" id="Q6AY40">
    <property type="glycosylation" value="3 sites"/>
</dbReference>
<dbReference type="PhosphoSitePlus" id="Q6AY40"/>
<dbReference type="PaxDb" id="10116-ENSRNOP00000026789"/>
<dbReference type="GeneID" id="360498"/>
<dbReference type="KEGG" id="rno:360498"/>
<dbReference type="UCSC" id="RGD:1307381">
    <property type="organism name" value="rat"/>
</dbReference>
<dbReference type="AGR" id="RGD:1307381"/>
<dbReference type="CTD" id="339123"/>
<dbReference type="RGD" id="1307381">
    <property type="gene designation" value="Jmjd8"/>
</dbReference>
<dbReference type="VEuPathDB" id="HostDB:ENSRNOG00000019729"/>
<dbReference type="eggNOG" id="KOG2131">
    <property type="taxonomic scope" value="Eukaryota"/>
</dbReference>
<dbReference type="HOGENOM" id="CLU_074983_0_0_1"/>
<dbReference type="InParanoid" id="Q6AY40"/>
<dbReference type="PhylomeDB" id="Q6AY40"/>
<dbReference type="PRO" id="PR:Q6AY40"/>
<dbReference type="Proteomes" id="UP000002494">
    <property type="component" value="Chromosome 10"/>
</dbReference>
<dbReference type="Bgee" id="ENSRNOG00000019729">
    <property type="expression patterns" value="Expressed in pancreas and 20 other cell types or tissues"/>
</dbReference>
<dbReference type="ExpressionAtlas" id="Q6AY40">
    <property type="expression patterns" value="baseline and differential"/>
</dbReference>
<dbReference type="GO" id="GO:0005737">
    <property type="term" value="C:cytoplasm"/>
    <property type="evidence" value="ECO:0000250"/>
    <property type="project" value="UniProtKB"/>
</dbReference>
<dbReference type="GO" id="GO:0005783">
    <property type="term" value="C:endoplasmic reticulum"/>
    <property type="evidence" value="ECO:0000250"/>
    <property type="project" value="UniProtKB"/>
</dbReference>
<dbReference type="GO" id="GO:0005788">
    <property type="term" value="C:endoplasmic reticulum lumen"/>
    <property type="evidence" value="ECO:0000250"/>
    <property type="project" value="UniProtKB"/>
</dbReference>
<dbReference type="GO" id="GO:0005634">
    <property type="term" value="C:nucleus"/>
    <property type="evidence" value="ECO:0000250"/>
    <property type="project" value="UniProtKB"/>
</dbReference>
<dbReference type="GO" id="GO:0000987">
    <property type="term" value="F:cis-regulatory region sequence-specific DNA binding"/>
    <property type="evidence" value="ECO:0000318"/>
    <property type="project" value="GO_Central"/>
</dbReference>
<dbReference type="GO" id="GO:0043123">
    <property type="term" value="P:positive regulation of canonical NF-kappaB signal transduction"/>
    <property type="evidence" value="ECO:0000250"/>
    <property type="project" value="UniProtKB"/>
</dbReference>
<dbReference type="GO" id="GO:1903672">
    <property type="term" value="P:positive regulation of sprouting angiogenesis"/>
    <property type="evidence" value="ECO:0000250"/>
    <property type="project" value="UniProtKB"/>
</dbReference>
<dbReference type="GO" id="GO:0006110">
    <property type="term" value="P:regulation of glycolytic process"/>
    <property type="evidence" value="ECO:0000250"/>
    <property type="project" value="UniProtKB"/>
</dbReference>
<dbReference type="GO" id="GO:1903302">
    <property type="term" value="P:regulation of pyruvate kinase activity"/>
    <property type="evidence" value="ECO:0000250"/>
    <property type="project" value="UniProtKB"/>
</dbReference>
<dbReference type="FunFam" id="2.60.120.650:FF:000039">
    <property type="entry name" value="JmjC domain-containing protein 8"/>
    <property type="match status" value="1"/>
</dbReference>
<dbReference type="Gene3D" id="2.60.120.650">
    <property type="entry name" value="Cupin"/>
    <property type="match status" value="1"/>
</dbReference>
<dbReference type="InterPro" id="IPR041667">
    <property type="entry name" value="Cupin_8"/>
</dbReference>
<dbReference type="InterPro" id="IPR003347">
    <property type="entry name" value="JmjC_dom"/>
</dbReference>
<dbReference type="InterPro" id="IPR050910">
    <property type="entry name" value="JMJD6_ArgDemeth/LysHydrox"/>
</dbReference>
<dbReference type="PANTHER" id="PTHR12480">
    <property type="entry name" value="ARGININE DEMETHYLASE AND LYSYL-HYDROXYLASE JMJD"/>
    <property type="match status" value="1"/>
</dbReference>
<dbReference type="PANTHER" id="PTHR12480:SF21">
    <property type="entry name" value="JMJC DOMAIN-CONTAINING PROTEIN 8"/>
    <property type="match status" value="1"/>
</dbReference>
<dbReference type="Pfam" id="PF13621">
    <property type="entry name" value="Cupin_8"/>
    <property type="match status" value="1"/>
</dbReference>
<dbReference type="SUPFAM" id="SSF51197">
    <property type="entry name" value="Clavaminate synthase-like"/>
    <property type="match status" value="1"/>
</dbReference>
<dbReference type="PROSITE" id="PS51184">
    <property type="entry name" value="JMJC"/>
    <property type="match status" value="1"/>
</dbReference>
<feature type="signal peptide" evidence="2">
    <location>
        <begin position="1"/>
        <end position="24"/>
    </location>
</feature>
<feature type="chain" id="PRO_0000344533" description="JmjC domain-containing protein 8" evidence="2">
    <location>
        <begin position="25"/>
        <end position="269"/>
    </location>
</feature>
<feature type="domain" description="JmjC" evidence="4">
    <location>
        <begin position="147"/>
        <end position="269"/>
    </location>
</feature>
<feature type="glycosylation site" description="N-linked (GlcNAc...) asparagine" evidence="3">
    <location>
        <position position="135"/>
    </location>
</feature>
<feature type="glycosylation site" description="N-linked (GlcNAc...) asparagine" evidence="3">
    <location>
        <position position="145"/>
    </location>
</feature>
<feature type="glycosylation site" description="N-linked (GlcNAc...) asparagine" evidence="3">
    <location>
        <position position="214"/>
    </location>
</feature>
<protein>
    <recommendedName>
        <fullName evidence="5">JmjC domain-containing protein 8</fullName>
    </recommendedName>
    <alternativeName>
        <fullName>Jumonji domain-containing protein 8</fullName>
    </alternativeName>
</protein>
<accession>Q6AY40</accession>
<keyword id="KW-0963">Cytoplasm</keyword>
<keyword id="KW-0256">Endoplasmic reticulum</keyword>
<keyword id="KW-0325">Glycoprotein</keyword>
<keyword id="KW-1185">Reference proteome</keyword>
<keyword id="KW-0732">Signal</keyword>